<protein>
    <recommendedName>
        <fullName>Olfactory receptor 6C4</fullName>
    </recommendedName>
    <alternativeName>
        <fullName>Olfactory receptor OR12-10</fullName>
    </alternativeName>
</protein>
<organism>
    <name type="scientific">Homo sapiens</name>
    <name type="common">Human</name>
    <dbReference type="NCBI Taxonomy" id="9606"/>
    <lineage>
        <taxon>Eukaryota</taxon>
        <taxon>Metazoa</taxon>
        <taxon>Chordata</taxon>
        <taxon>Craniata</taxon>
        <taxon>Vertebrata</taxon>
        <taxon>Euteleostomi</taxon>
        <taxon>Mammalia</taxon>
        <taxon>Eutheria</taxon>
        <taxon>Euarchontoglires</taxon>
        <taxon>Primates</taxon>
        <taxon>Haplorrhini</taxon>
        <taxon>Catarrhini</taxon>
        <taxon>Hominidae</taxon>
        <taxon>Homo</taxon>
    </lineage>
</organism>
<keyword id="KW-1003">Cell membrane</keyword>
<keyword id="KW-1015">Disulfide bond</keyword>
<keyword id="KW-0297">G-protein coupled receptor</keyword>
<keyword id="KW-0325">Glycoprotein</keyword>
<keyword id="KW-0472">Membrane</keyword>
<keyword id="KW-0552">Olfaction</keyword>
<keyword id="KW-0675">Receptor</keyword>
<keyword id="KW-1185">Reference proteome</keyword>
<keyword id="KW-0716">Sensory transduction</keyword>
<keyword id="KW-0807">Transducer</keyword>
<keyword id="KW-0812">Transmembrane</keyword>
<keyword id="KW-1133">Transmembrane helix</keyword>
<proteinExistence type="evidence at transcript level"/>
<accession>Q8NGE1</accession>
<accession>A8MZG7</accession>
<accession>B2RNN2</accession>
<accession>Q6IFK1</accession>
<evidence type="ECO:0000255" key="1"/>
<evidence type="ECO:0000255" key="2">
    <source>
        <dbReference type="PROSITE-ProRule" id="PRU00521"/>
    </source>
</evidence>
<evidence type="ECO:0000269" key="3">
    <source>
    </source>
</evidence>
<evidence type="ECO:0000269" key="4">
    <source ref="3"/>
</evidence>
<evidence type="ECO:0000305" key="5"/>
<feature type="chain" id="PRO_0000150626" description="Olfactory receptor 6C4">
    <location>
        <begin position="1"/>
        <end position="309"/>
    </location>
</feature>
<feature type="topological domain" description="Extracellular" evidence="1">
    <location>
        <begin position="1"/>
        <end position="23"/>
    </location>
</feature>
<feature type="transmembrane region" description="Helical; Name=1" evidence="1">
    <location>
        <begin position="24"/>
        <end position="44"/>
    </location>
</feature>
<feature type="topological domain" description="Cytoplasmic" evidence="1">
    <location>
        <begin position="45"/>
        <end position="52"/>
    </location>
</feature>
<feature type="transmembrane region" description="Helical; Name=2" evidence="1">
    <location>
        <begin position="53"/>
        <end position="73"/>
    </location>
</feature>
<feature type="topological domain" description="Extracellular" evidence="1">
    <location>
        <begin position="74"/>
        <end position="97"/>
    </location>
</feature>
<feature type="transmembrane region" description="Helical; Name=3" evidence="1">
    <location>
        <begin position="98"/>
        <end position="118"/>
    </location>
</feature>
<feature type="topological domain" description="Cytoplasmic" evidence="1">
    <location>
        <begin position="119"/>
        <end position="137"/>
    </location>
</feature>
<feature type="transmembrane region" description="Helical; Name=4" evidence="1">
    <location>
        <begin position="138"/>
        <end position="158"/>
    </location>
</feature>
<feature type="topological domain" description="Extracellular" evidence="1">
    <location>
        <begin position="159"/>
        <end position="195"/>
    </location>
</feature>
<feature type="transmembrane region" description="Helical; Name=5" evidence="1">
    <location>
        <begin position="196"/>
        <end position="215"/>
    </location>
</feature>
<feature type="topological domain" description="Cytoplasmic" evidence="1">
    <location>
        <begin position="216"/>
        <end position="235"/>
    </location>
</feature>
<feature type="transmembrane region" description="Helical; Name=6" evidence="1">
    <location>
        <begin position="236"/>
        <end position="256"/>
    </location>
</feature>
<feature type="topological domain" description="Extracellular" evidence="1">
    <location>
        <begin position="257"/>
        <end position="269"/>
    </location>
</feature>
<feature type="transmembrane region" description="Helical; Name=7" evidence="1">
    <location>
        <begin position="270"/>
        <end position="290"/>
    </location>
</feature>
<feature type="topological domain" description="Cytoplasmic" evidence="1">
    <location>
        <begin position="291"/>
        <end position="309"/>
    </location>
</feature>
<feature type="glycosylation site" description="N-linked (GlcNAc...) asparagine" evidence="1">
    <location>
        <position position="3"/>
    </location>
</feature>
<feature type="disulfide bond" evidence="2">
    <location>
        <begin position="95"/>
        <end position="187"/>
    </location>
</feature>
<feature type="sequence variant" id="VAR_034246" description="In dbSNP:rs7313899." evidence="3 4">
    <original>I</original>
    <variation>V</variation>
    <location>
        <position position="37"/>
    </location>
</feature>
<feature type="sequence variant" id="VAR_053220" description="In dbSNP:rs11835716.">
    <original>M</original>
    <variation>T</variation>
    <location>
        <position position="83"/>
    </location>
</feature>
<sequence length="309" mass="35010">MKNRTMFGEFILLGLTNQPELQVMIFIFLFLTYMLSILGNLTIITLTLLDPHLQTPMYFFLRNFSFLEISFTSIFIPRFLTSMTTGNKVISFAGCLTQYFFAIFLGATEFYLLASMSYDRYVAICKPLHYLTIMSSRVCIQLVFCSWLGGFLAILPPIILMTQVDFCVSNILNHYYCDYGPLVELACSDTSLLELMVILLAVVTLMVTLVLVTLSYTYIIRTILRIPSAQQRTKAFSTCSSHMIVISLSYGSCMFMYINPSAKEGGAFNKGIAVLITSVTPLLNPFIYTLRNQQVKQAFKDSVKKIVKL</sequence>
<comment type="function">
    <text evidence="5">Odorant receptor.</text>
</comment>
<comment type="subcellular location">
    <subcellularLocation>
        <location>Cell membrane</location>
        <topology>Multi-pass membrane protein</topology>
    </subcellularLocation>
</comment>
<comment type="similarity">
    <text evidence="2">Belongs to the G-protein coupled receptor 1 family.</text>
</comment>
<comment type="online information" name="Human Olfactory Receptor Data Exploratorium (HORDE)">
    <link uri="http://genome.weizmann.ac.il/horde/card/index/symbol:OR6C4"/>
</comment>
<reference key="1">
    <citation type="submission" date="2001-07" db="EMBL/GenBank/DDBJ databases">
        <title>Genome-wide discovery and analysis of human seven transmembrane helix receptor genes.</title>
        <authorList>
            <person name="Suwa M."/>
            <person name="Sato T."/>
            <person name="Okouchi I."/>
            <person name="Arita M."/>
            <person name="Futami K."/>
            <person name="Matsumoto S."/>
            <person name="Tsutsumi S."/>
            <person name="Aburatani H."/>
            <person name="Asai K."/>
            <person name="Akiyama Y."/>
        </authorList>
    </citation>
    <scope>NUCLEOTIDE SEQUENCE [GENOMIC DNA]</scope>
</reference>
<reference key="2">
    <citation type="journal article" date="2006" name="Nature">
        <title>The finished DNA sequence of human chromosome 12.</title>
        <authorList>
            <person name="Scherer S.E."/>
            <person name="Muzny D.M."/>
            <person name="Buhay C.J."/>
            <person name="Chen R."/>
            <person name="Cree A."/>
            <person name="Ding Y."/>
            <person name="Dugan-Rocha S."/>
            <person name="Gill R."/>
            <person name="Gunaratne P."/>
            <person name="Harris R.A."/>
            <person name="Hawes A.C."/>
            <person name="Hernandez J."/>
            <person name="Hodgson A.V."/>
            <person name="Hume J."/>
            <person name="Jackson A."/>
            <person name="Khan Z.M."/>
            <person name="Kovar-Smith C."/>
            <person name="Lewis L.R."/>
            <person name="Lozado R.J."/>
            <person name="Metzker M.L."/>
            <person name="Milosavljevic A."/>
            <person name="Miner G.R."/>
            <person name="Montgomery K.T."/>
            <person name="Morgan M.B."/>
            <person name="Nazareth L.V."/>
            <person name="Scott G."/>
            <person name="Sodergren E."/>
            <person name="Song X.-Z."/>
            <person name="Steffen D."/>
            <person name="Lovering R.C."/>
            <person name="Wheeler D.A."/>
            <person name="Worley K.C."/>
            <person name="Yuan Y."/>
            <person name="Zhang Z."/>
            <person name="Adams C.Q."/>
            <person name="Ansari-Lari M.A."/>
            <person name="Ayele M."/>
            <person name="Brown M.J."/>
            <person name="Chen G."/>
            <person name="Chen Z."/>
            <person name="Clerc-Blankenburg K.P."/>
            <person name="Davis C."/>
            <person name="Delgado O."/>
            <person name="Dinh H.H."/>
            <person name="Draper H."/>
            <person name="Gonzalez-Garay M.L."/>
            <person name="Havlak P."/>
            <person name="Jackson L.R."/>
            <person name="Jacob L.S."/>
            <person name="Kelly S.H."/>
            <person name="Li L."/>
            <person name="Li Z."/>
            <person name="Liu J."/>
            <person name="Liu W."/>
            <person name="Lu J."/>
            <person name="Maheshwari M."/>
            <person name="Nguyen B.-V."/>
            <person name="Okwuonu G.O."/>
            <person name="Pasternak S."/>
            <person name="Perez L.M."/>
            <person name="Plopper F.J.H."/>
            <person name="Santibanez J."/>
            <person name="Shen H."/>
            <person name="Tabor P.E."/>
            <person name="Verduzco D."/>
            <person name="Waldron L."/>
            <person name="Wang Q."/>
            <person name="Williams G.A."/>
            <person name="Zhang J."/>
            <person name="Zhou J."/>
            <person name="Allen C.C."/>
            <person name="Amin A.G."/>
            <person name="Anyalebechi V."/>
            <person name="Bailey M."/>
            <person name="Barbaria J.A."/>
            <person name="Bimage K.E."/>
            <person name="Bryant N.P."/>
            <person name="Burch P.E."/>
            <person name="Burkett C.E."/>
            <person name="Burrell K.L."/>
            <person name="Calderon E."/>
            <person name="Cardenas V."/>
            <person name="Carter K."/>
            <person name="Casias K."/>
            <person name="Cavazos I."/>
            <person name="Cavazos S.R."/>
            <person name="Ceasar H."/>
            <person name="Chacko J."/>
            <person name="Chan S.N."/>
            <person name="Chavez D."/>
            <person name="Christopoulos C."/>
            <person name="Chu J."/>
            <person name="Cockrell R."/>
            <person name="Cox C.D."/>
            <person name="Dang M."/>
            <person name="Dathorne S.R."/>
            <person name="David R."/>
            <person name="Davis C.M."/>
            <person name="Davy-Carroll L."/>
            <person name="Deshazo D.R."/>
            <person name="Donlin J.E."/>
            <person name="D'Souza L."/>
            <person name="Eaves K.A."/>
            <person name="Egan A."/>
            <person name="Emery-Cohen A.J."/>
            <person name="Escotto M."/>
            <person name="Flagg N."/>
            <person name="Forbes L.D."/>
            <person name="Gabisi A.M."/>
            <person name="Garza M."/>
            <person name="Hamilton C."/>
            <person name="Henderson N."/>
            <person name="Hernandez O."/>
            <person name="Hines S."/>
            <person name="Hogues M.E."/>
            <person name="Huang M."/>
            <person name="Idlebird D.G."/>
            <person name="Johnson R."/>
            <person name="Jolivet A."/>
            <person name="Jones S."/>
            <person name="Kagan R."/>
            <person name="King L.M."/>
            <person name="Leal B."/>
            <person name="Lebow H."/>
            <person name="Lee S."/>
            <person name="LeVan J.M."/>
            <person name="Lewis L.C."/>
            <person name="London P."/>
            <person name="Lorensuhewa L.M."/>
            <person name="Loulseged H."/>
            <person name="Lovett D.A."/>
            <person name="Lucier A."/>
            <person name="Lucier R.L."/>
            <person name="Ma J."/>
            <person name="Madu R.C."/>
            <person name="Mapua P."/>
            <person name="Martindale A.D."/>
            <person name="Martinez E."/>
            <person name="Massey E."/>
            <person name="Mawhiney S."/>
            <person name="Meador M.G."/>
            <person name="Mendez S."/>
            <person name="Mercado C."/>
            <person name="Mercado I.C."/>
            <person name="Merritt C.E."/>
            <person name="Miner Z.L."/>
            <person name="Minja E."/>
            <person name="Mitchell T."/>
            <person name="Mohabbat F."/>
            <person name="Mohabbat K."/>
            <person name="Montgomery B."/>
            <person name="Moore N."/>
            <person name="Morris S."/>
            <person name="Munidasa M."/>
            <person name="Ngo R.N."/>
            <person name="Nguyen N.B."/>
            <person name="Nickerson E."/>
            <person name="Nwaokelemeh O.O."/>
            <person name="Nwokenkwo S."/>
            <person name="Obregon M."/>
            <person name="Oguh M."/>
            <person name="Oragunye N."/>
            <person name="Oviedo R.J."/>
            <person name="Parish B.J."/>
            <person name="Parker D.N."/>
            <person name="Parrish J."/>
            <person name="Parks K.L."/>
            <person name="Paul H.A."/>
            <person name="Payton B.A."/>
            <person name="Perez A."/>
            <person name="Perrin W."/>
            <person name="Pickens A."/>
            <person name="Primus E.L."/>
            <person name="Pu L.-L."/>
            <person name="Puazo M."/>
            <person name="Quiles M.M."/>
            <person name="Quiroz J.B."/>
            <person name="Rabata D."/>
            <person name="Reeves K."/>
            <person name="Ruiz S.J."/>
            <person name="Shao H."/>
            <person name="Sisson I."/>
            <person name="Sonaike T."/>
            <person name="Sorelle R.P."/>
            <person name="Sutton A.E."/>
            <person name="Svatek A.F."/>
            <person name="Svetz L.A."/>
            <person name="Tamerisa K.S."/>
            <person name="Taylor T.R."/>
            <person name="Teague B."/>
            <person name="Thomas N."/>
            <person name="Thorn R.D."/>
            <person name="Trejos Z.Y."/>
            <person name="Trevino B.K."/>
            <person name="Ukegbu O.N."/>
            <person name="Urban J.B."/>
            <person name="Vasquez L.I."/>
            <person name="Vera V.A."/>
            <person name="Villasana D.M."/>
            <person name="Wang L."/>
            <person name="Ward-Moore S."/>
            <person name="Warren J.T."/>
            <person name="Wei X."/>
            <person name="White F."/>
            <person name="Williamson A.L."/>
            <person name="Wleczyk R."/>
            <person name="Wooden H.S."/>
            <person name="Wooden S.H."/>
            <person name="Yen J."/>
            <person name="Yoon L."/>
            <person name="Yoon V."/>
            <person name="Zorrilla S.E."/>
            <person name="Nelson D."/>
            <person name="Kucherlapati R."/>
            <person name="Weinstock G."/>
            <person name="Gibbs R.A."/>
        </authorList>
    </citation>
    <scope>NUCLEOTIDE SEQUENCE [LARGE SCALE GENOMIC DNA]</scope>
</reference>
<reference key="3">
    <citation type="submission" date="2005-07" db="EMBL/GenBank/DDBJ databases">
        <authorList>
            <person name="Mural R.J."/>
            <person name="Istrail S."/>
            <person name="Sutton G.G."/>
            <person name="Florea L."/>
            <person name="Halpern A.L."/>
            <person name="Mobarry C.M."/>
            <person name="Lippert R."/>
            <person name="Walenz B."/>
            <person name="Shatkay H."/>
            <person name="Dew I."/>
            <person name="Miller J.R."/>
            <person name="Flanigan M.J."/>
            <person name="Edwards N.J."/>
            <person name="Bolanos R."/>
            <person name="Fasulo D."/>
            <person name="Halldorsson B.V."/>
            <person name="Hannenhalli S."/>
            <person name="Turner R."/>
            <person name="Yooseph S."/>
            <person name="Lu F."/>
            <person name="Nusskern D.R."/>
            <person name="Shue B.C."/>
            <person name="Zheng X.H."/>
            <person name="Zhong F."/>
            <person name="Delcher A.L."/>
            <person name="Huson D.H."/>
            <person name="Kravitz S.A."/>
            <person name="Mouchard L."/>
            <person name="Reinert K."/>
            <person name="Remington K.A."/>
            <person name="Clark A.G."/>
            <person name="Waterman M.S."/>
            <person name="Eichler E.E."/>
            <person name="Adams M.D."/>
            <person name="Hunkapiller M.W."/>
            <person name="Myers E.W."/>
            <person name="Venter J.C."/>
        </authorList>
    </citation>
    <scope>NUCLEOTIDE SEQUENCE [LARGE SCALE GENOMIC DNA]</scope>
    <scope>VARIANT VAL-37</scope>
</reference>
<reference key="4">
    <citation type="journal article" date="2004" name="Genome Res.">
        <title>The status, quality, and expansion of the NIH full-length cDNA project: the Mammalian Gene Collection (MGC).</title>
        <authorList>
            <consortium name="The MGC Project Team"/>
        </authorList>
    </citation>
    <scope>NUCLEOTIDE SEQUENCE [LARGE SCALE MRNA]</scope>
    <scope>VARIANT VAL-37</scope>
</reference>
<reference key="5">
    <citation type="journal article" date="2004" name="Proc. Natl. Acad. Sci. U.S.A.">
        <title>The human olfactory receptor gene family.</title>
        <authorList>
            <person name="Malnic B."/>
            <person name="Godfrey P.A."/>
            <person name="Buck L.B."/>
        </authorList>
    </citation>
    <scope>IDENTIFICATION</scope>
</reference>
<reference key="6">
    <citation type="journal article" date="2004" name="Proc. Natl. Acad. Sci. U.S.A.">
        <authorList>
            <person name="Malnic B."/>
            <person name="Godfrey P.A."/>
            <person name="Buck L.B."/>
        </authorList>
    </citation>
    <scope>ERRATUM OF PUBMED:14983052</scope>
</reference>
<dbReference type="EMBL" id="AB065869">
    <property type="protein sequence ID" value="BAC06087.1"/>
    <property type="molecule type" value="Genomic_DNA"/>
</dbReference>
<dbReference type="EMBL" id="AC009779">
    <property type="status" value="NOT_ANNOTATED_CDS"/>
    <property type="molecule type" value="Genomic_DNA"/>
</dbReference>
<dbReference type="EMBL" id="CH471054">
    <property type="protein sequence ID" value="EAW96815.1"/>
    <property type="molecule type" value="Genomic_DNA"/>
</dbReference>
<dbReference type="EMBL" id="BC137000">
    <property type="protein sequence ID" value="AAI37001.1"/>
    <property type="molecule type" value="mRNA"/>
</dbReference>
<dbReference type="EMBL" id="BC137001">
    <property type="protein sequence ID" value="AAI37002.1"/>
    <property type="molecule type" value="mRNA"/>
</dbReference>
<dbReference type="EMBL" id="BK004261">
    <property type="protein sequence ID" value="DAA04659.1"/>
    <property type="molecule type" value="Genomic_DNA"/>
</dbReference>
<dbReference type="CCDS" id="CCDS31827.1"/>
<dbReference type="RefSeq" id="NP_001005494.1">
    <property type="nucleotide sequence ID" value="NM_001005494.2"/>
</dbReference>
<dbReference type="RefSeq" id="NP_001372904.1">
    <property type="nucleotide sequence ID" value="NM_001385975.1"/>
</dbReference>
<dbReference type="SMR" id="Q8NGE1"/>
<dbReference type="BioGRID" id="131139">
    <property type="interactions" value="1"/>
</dbReference>
<dbReference type="FunCoup" id="Q8NGE1">
    <property type="interactions" value="417"/>
</dbReference>
<dbReference type="IntAct" id="Q8NGE1">
    <property type="interactions" value="1"/>
</dbReference>
<dbReference type="STRING" id="9606.ENSP00000493181"/>
<dbReference type="GlyCosmos" id="Q8NGE1">
    <property type="glycosylation" value="1 site, No reported glycans"/>
</dbReference>
<dbReference type="GlyGen" id="Q8NGE1">
    <property type="glycosylation" value="3 sites, 1 O-linked glycan (2 sites)"/>
</dbReference>
<dbReference type="BioMuta" id="OR6C4"/>
<dbReference type="DMDM" id="38258178"/>
<dbReference type="MassIVE" id="Q8NGE1"/>
<dbReference type="PaxDb" id="9606-ENSP00000377799"/>
<dbReference type="PeptideAtlas" id="Q8NGE1"/>
<dbReference type="ProteomicsDB" id="73487"/>
<dbReference type="Antibodypedia" id="53753">
    <property type="antibodies" value="62 antibodies from 18 providers"/>
</dbReference>
<dbReference type="DNASU" id="341418"/>
<dbReference type="Ensembl" id="ENST00000394256.2">
    <property type="protein sequence ID" value="ENSP00000377799.2"/>
    <property type="gene ID" value="ENSG00000179626.4"/>
</dbReference>
<dbReference type="Ensembl" id="ENST00000641569.1">
    <property type="protein sequence ID" value="ENSP00000493181.1"/>
    <property type="gene ID" value="ENSG00000179626.4"/>
</dbReference>
<dbReference type="Ensembl" id="ENST00000641851.1">
    <property type="protein sequence ID" value="ENSP00000493445.1"/>
    <property type="gene ID" value="ENSG00000179626.4"/>
</dbReference>
<dbReference type="GeneID" id="341418"/>
<dbReference type="KEGG" id="hsa:341418"/>
<dbReference type="MANE-Select" id="ENST00000641569.1">
    <property type="protein sequence ID" value="ENSP00000493181.1"/>
    <property type="RefSeq nucleotide sequence ID" value="NM_001005494.2"/>
    <property type="RefSeq protein sequence ID" value="NP_001005494.1"/>
</dbReference>
<dbReference type="UCSC" id="uc010spp.3">
    <property type="organism name" value="human"/>
</dbReference>
<dbReference type="AGR" id="HGNC:19632"/>
<dbReference type="CTD" id="341418"/>
<dbReference type="GeneCards" id="OR6C4"/>
<dbReference type="HGNC" id="HGNC:19632">
    <property type="gene designation" value="OR6C4"/>
</dbReference>
<dbReference type="HPA" id="ENSG00000179626">
    <property type="expression patterns" value="Not detected"/>
</dbReference>
<dbReference type="neXtProt" id="NX_Q8NGE1"/>
<dbReference type="OpenTargets" id="ENSG00000179626"/>
<dbReference type="PharmGKB" id="PA134970819"/>
<dbReference type="VEuPathDB" id="HostDB:ENSG00000179626"/>
<dbReference type="eggNOG" id="ENOG502QVH7">
    <property type="taxonomic scope" value="Eukaryota"/>
</dbReference>
<dbReference type="GeneTree" id="ENSGT01130000278269"/>
<dbReference type="HOGENOM" id="CLU_012526_1_1_1"/>
<dbReference type="InParanoid" id="Q8NGE1"/>
<dbReference type="OMA" id="DFCVSNV"/>
<dbReference type="OrthoDB" id="9902777at2759"/>
<dbReference type="PAN-GO" id="Q8NGE1">
    <property type="GO annotations" value="1 GO annotation based on evolutionary models"/>
</dbReference>
<dbReference type="PhylomeDB" id="Q8NGE1"/>
<dbReference type="TreeFam" id="TF336833"/>
<dbReference type="PathwayCommons" id="Q8NGE1"/>
<dbReference type="Reactome" id="R-HSA-9752946">
    <property type="pathway name" value="Expression and translocation of olfactory receptors"/>
</dbReference>
<dbReference type="BioGRID-ORCS" id="341418">
    <property type="hits" value="5 hits in 739 CRISPR screens"/>
</dbReference>
<dbReference type="GeneWiki" id="OR6C4"/>
<dbReference type="GenomeRNAi" id="341418"/>
<dbReference type="Pharos" id="Q8NGE1">
    <property type="development level" value="Tdark"/>
</dbReference>
<dbReference type="PRO" id="PR:Q8NGE1"/>
<dbReference type="Proteomes" id="UP000005640">
    <property type="component" value="Chromosome 12"/>
</dbReference>
<dbReference type="RNAct" id="Q8NGE1">
    <property type="molecule type" value="protein"/>
</dbReference>
<dbReference type="Bgee" id="ENSG00000179626">
    <property type="expression patterns" value="Expressed in gall bladder and 21 other cell types or tissues"/>
</dbReference>
<dbReference type="GO" id="GO:0005886">
    <property type="term" value="C:plasma membrane"/>
    <property type="evidence" value="ECO:0007669"/>
    <property type="project" value="UniProtKB-SubCell"/>
</dbReference>
<dbReference type="GO" id="GO:0004930">
    <property type="term" value="F:G protein-coupled receptor activity"/>
    <property type="evidence" value="ECO:0007669"/>
    <property type="project" value="UniProtKB-KW"/>
</dbReference>
<dbReference type="GO" id="GO:0004984">
    <property type="term" value="F:olfactory receptor activity"/>
    <property type="evidence" value="ECO:0000318"/>
    <property type="project" value="GO_Central"/>
</dbReference>
<dbReference type="CDD" id="cd15912">
    <property type="entry name" value="7tmA_OR6C-like"/>
    <property type="match status" value="1"/>
</dbReference>
<dbReference type="FunFam" id="1.20.1070.10:FF:000013">
    <property type="entry name" value="Olfactory receptor"/>
    <property type="match status" value="1"/>
</dbReference>
<dbReference type="Gene3D" id="1.20.1070.10">
    <property type="entry name" value="Rhodopsin 7-helix transmembrane proteins"/>
    <property type="match status" value="1"/>
</dbReference>
<dbReference type="InterPro" id="IPR000276">
    <property type="entry name" value="GPCR_Rhodpsn"/>
</dbReference>
<dbReference type="InterPro" id="IPR017452">
    <property type="entry name" value="GPCR_Rhodpsn_7TM"/>
</dbReference>
<dbReference type="InterPro" id="IPR000725">
    <property type="entry name" value="Olfact_rcpt"/>
</dbReference>
<dbReference type="InterPro" id="IPR047132">
    <property type="entry name" value="Olfact_rcpt_6C-like"/>
</dbReference>
<dbReference type="PANTHER" id="PTHR26454">
    <property type="entry name" value="OLFACTORY RECEPTOR"/>
    <property type="match status" value="1"/>
</dbReference>
<dbReference type="PANTHER" id="PTHR26454:SF9">
    <property type="entry name" value="OLFACTORY RECEPTOR 6C4"/>
    <property type="match status" value="1"/>
</dbReference>
<dbReference type="Pfam" id="PF13853">
    <property type="entry name" value="7tm_4"/>
    <property type="match status" value="1"/>
</dbReference>
<dbReference type="PRINTS" id="PR00237">
    <property type="entry name" value="GPCRRHODOPSN"/>
</dbReference>
<dbReference type="PRINTS" id="PR00245">
    <property type="entry name" value="OLFACTORYR"/>
</dbReference>
<dbReference type="SUPFAM" id="SSF81321">
    <property type="entry name" value="Family A G protein-coupled receptor-like"/>
    <property type="match status" value="1"/>
</dbReference>
<dbReference type="PROSITE" id="PS00237">
    <property type="entry name" value="G_PROTEIN_RECEP_F1_1"/>
    <property type="match status" value="1"/>
</dbReference>
<dbReference type="PROSITE" id="PS50262">
    <property type="entry name" value="G_PROTEIN_RECEP_F1_2"/>
    <property type="match status" value="1"/>
</dbReference>
<gene>
    <name type="primary">OR6C4</name>
</gene>
<name>OR6C4_HUMAN</name>